<reference key="1">
    <citation type="journal article" date="2006" name="Genome Res.">
        <title>Skewed genomic variability in strains of the toxigenic bacterial pathogen, Clostridium perfringens.</title>
        <authorList>
            <person name="Myers G.S.A."/>
            <person name="Rasko D.A."/>
            <person name="Cheung J.K."/>
            <person name="Ravel J."/>
            <person name="Seshadri R."/>
            <person name="DeBoy R.T."/>
            <person name="Ren Q."/>
            <person name="Varga J."/>
            <person name="Awad M.M."/>
            <person name="Brinkac L.M."/>
            <person name="Daugherty S.C."/>
            <person name="Haft D.H."/>
            <person name="Dodson R.J."/>
            <person name="Madupu R."/>
            <person name="Nelson W.C."/>
            <person name="Rosovitz M.J."/>
            <person name="Sullivan S.A."/>
            <person name="Khouri H."/>
            <person name="Dimitrov G.I."/>
            <person name="Watkins K.L."/>
            <person name="Mulligan S."/>
            <person name="Benton J."/>
            <person name="Radune D."/>
            <person name="Fisher D.J."/>
            <person name="Atkins H.S."/>
            <person name="Hiscox T."/>
            <person name="Jost B.H."/>
            <person name="Billington S.J."/>
            <person name="Songer J.G."/>
            <person name="McClane B.A."/>
            <person name="Titball R.W."/>
            <person name="Rood J.I."/>
            <person name="Melville S.B."/>
            <person name="Paulsen I.T."/>
        </authorList>
    </citation>
    <scope>NUCLEOTIDE SEQUENCE [LARGE SCALE GENOMIC DNA]</scope>
    <source>
        <strain>SM101 / Type A</strain>
    </source>
</reference>
<keyword id="KW-0004">4Fe-4S</keyword>
<keyword id="KW-0963">Cytoplasm</keyword>
<keyword id="KW-0408">Iron</keyword>
<keyword id="KW-0411">Iron-sulfur</keyword>
<keyword id="KW-0479">Metal-binding</keyword>
<keyword id="KW-0949">S-adenosyl-L-methionine</keyword>
<keyword id="KW-0808">Transferase</keyword>
<dbReference type="EC" id="2.8.4.4" evidence="1"/>
<dbReference type="EMBL" id="CP000312">
    <property type="protein sequence ID" value="ABG87226.1"/>
    <property type="molecule type" value="Genomic_DNA"/>
</dbReference>
<dbReference type="RefSeq" id="WP_011592583.1">
    <property type="nucleotide sequence ID" value="NC_008262.1"/>
</dbReference>
<dbReference type="SMR" id="Q0SSE5"/>
<dbReference type="KEGG" id="cpr:CPR_1647"/>
<dbReference type="Proteomes" id="UP000001824">
    <property type="component" value="Chromosome"/>
</dbReference>
<dbReference type="GO" id="GO:0005829">
    <property type="term" value="C:cytosol"/>
    <property type="evidence" value="ECO:0007669"/>
    <property type="project" value="TreeGrafter"/>
</dbReference>
<dbReference type="GO" id="GO:0051539">
    <property type="term" value="F:4 iron, 4 sulfur cluster binding"/>
    <property type="evidence" value="ECO:0007669"/>
    <property type="project" value="UniProtKB-UniRule"/>
</dbReference>
<dbReference type="GO" id="GO:0035599">
    <property type="term" value="F:aspartic acid methylthiotransferase activity"/>
    <property type="evidence" value="ECO:0007669"/>
    <property type="project" value="TreeGrafter"/>
</dbReference>
<dbReference type="GO" id="GO:0046872">
    <property type="term" value="F:metal ion binding"/>
    <property type="evidence" value="ECO:0007669"/>
    <property type="project" value="UniProtKB-KW"/>
</dbReference>
<dbReference type="GO" id="GO:0103039">
    <property type="term" value="F:protein methylthiotransferase activity"/>
    <property type="evidence" value="ECO:0007669"/>
    <property type="project" value="UniProtKB-EC"/>
</dbReference>
<dbReference type="GO" id="GO:0006400">
    <property type="term" value="P:tRNA modification"/>
    <property type="evidence" value="ECO:0007669"/>
    <property type="project" value="InterPro"/>
</dbReference>
<dbReference type="CDD" id="cd01335">
    <property type="entry name" value="Radical_SAM"/>
    <property type="match status" value="1"/>
</dbReference>
<dbReference type="FunFam" id="3.80.30.20:FF:000001">
    <property type="entry name" value="tRNA-2-methylthio-N(6)-dimethylallyladenosine synthase 2"/>
    <property type="match status" value="1"/>
</dbReference>
<dbReference type="Gene3D" id="3.40.50.12160">
    <property type="entry name" value="Methylthiotransferase, N-terminal domain"/>
    <property type="match status" value="1"/>
</dbReference>
<dbReference type="Gene3D" id="2.40.50.140">
    <property type="entry name" value="Nucleic acid-binding proteins"/>
    <property type="match status" value="1"/>
</dbReference>
<dbReference type="Gene3D" id="3.80.30.20">
    <property type="entry name" value="tm_1862 like domain"/>
    <property type="match status" value="1"/>
</dbReference>
<dbReference type="HAMAP" id="MF_01865">
    <property type="entry name" value="MTTase_RimO"/>
    <property type="match status" value="1"/>
</dbReference>
<dbReference type="InterPro" id="IPR006638">
    <property type="entry name" value="Elp3/MiaA/NifB-like_rSAM"/>
</dbReference>
<dbReference type="InterPro" id="IPR005839">
    <property type="entry name" value="Methylthiotransferase"/>
</dbReference>
<dbReference type="InterPro" id="IPR020612">
    <property type="entry name" value="Methylthiotransferase_CS"/>
</dbReference>
<dbReference type="InterPro" id="IPR013848">
    <property type="entry name" value="Methylthiotransferase_N"/>
</dbReference>
<dbReference type="InterPro" id="IPR038135">
    <property type="entry name" value="Methylthiotransferase_N_sf"/>
</dbReference>
<dbReference type="InterPro" id="IPR012340">
    <property type="entry name" value="NA-bd_OB-fold"/>
</dbReference>
<dbReference type="InterPro" id="IPR005840">
    <property type="entry name" value="Ribosomal_uS12_MeSTrfase_RimO"/>
</dbReference>
<dbReference type="InterPro" id="IPR007197">
    <property type="entry name" value="rSAM"/>
</dbReference>
<dbReference type="InterPro" id="IPR023404">
    <property type="entry name" value="rSAM_horseshoe"/>
</dbReference>
<dbReference type="InterPro" id="IPR002792">
    <property type="entry name" value="TRAM_dom"/>
</dbReference>
<dbReference type="NCBIfam" id="TIGR01125">
    <property type="entry name" value="30S ribosomal protein S12 methylthiotransferase RimO"/>
    <property type="match status" value="1"/>
</dbReference>
<dbReference type="NCBIfam" id="TIGR00089">
    <property type="entry name" value="MiaB/RimO family radical SAM methylthiotransferase"/>
    <property type="match status" value="1"/>
</dbReference>
<dbReference type="PANTHER" id="PTHR43837">
    <property type="entry name" value="RIBOSOMAL PROTEIN S12 METHYLTHIOTRANSFERASE RIMO"/>
    <property type="match status" value="1"/>
</dbReference>
<dbReference type="PANTHER" id="PTHR43837:SF1">
    <property type="entry name" value="RIBOSOMAL PROTEIN US12 METHYLTHIOTRANSFERASE RIMO"/>
    <property type="match status" value="1"/>
</dbReference>
<dbReference type="Pfam" id="PF04055">
    <property type="entry name" value="Radical_SAM"/>
    <property type="match status" value="1"/>
</dbReference>
<dbReference type="Pfam" id="PF18693">
    <property type="entry name" value="TRAM_2"/>
    <property type="match status" value="1"/>
</dbReference>
<dbReference type="Pfam" id="PF00919">
    <property type="entry name" value="UPF0004"/>
    <property type="match status" value="1"/>
</dbReference>
<dbReference type="SFLD" id="SFLDG01082">
    <property type="entry name" value="B12-binding_domain_containing"/>
    <property type="match status" value="1"/>
</dbReference>
<dbReference type="SFLD" id="SFLDG01061">
    <property type="entry name" value="methylthiotransferase"/>
    <property type="match status" value="1"/>
</dbReference>
<dbReference type="SFLD" id="SFLDF00274">
    <property type="entry name" value="ribosomal_protein_S12_methylth"/>
    <property type="match status" value="1"/>
</dbReference>
<dbReference type="SMART" id="SM00729">
    <property type="entry name" value="Elp3"/>
    <property type="match status" value="1"/>
</dbReference>
<dbReference type="SUPFAM" id="SSF102114">
    <property type="entry name" value="Radical SAM enzymes"/>
    <property type="match status" value="1"/>
</dbReference>
<dbReference type="PROSITE" id="PS51449">
    <property type="entry name" value="MTTASE_N"/>
    <property type="match status" value="1"/>
</dbReference>
<dbReference type="PROSITE" id="PS01278">
    <property type="entry name" value="MTTASE_RADICAL"/>
    <property type="match status" value="1"/>
</dbReference>
<dbReference type="PROSITE" id="PS51918">
    <property type="entry name" value="RADICAL_SAM"/>
    <property type="match status" value="1"/>
</dbReference>
<gene>
    <name evidence="1" type="primary">rimO</name>
    <name type="ordered locus">CPR_1647</name>
</gene>
<organism>
    <name type="scientific">Clostridium perfringens (strain SM101 / Type A)</name>
    <dbReference type="NCBI Taxonomy" id="289380"/>
    <lineage>
        <taxon>Bacteria</taxon>
        <taxon>Bacillati</taxon>
        <taxon>Bacillota</taxon>
        <taxon>Clostridia</taxon>
        <taxon>Eubacteriales</taxon>
        <taxon>Clostridiaceae</taxon>
        <taxon>Clostridium</taxon>
    </lineage>
</organism>
<feature type="chain" id="PRO_0000374788" description="Ribosomal protein uS12 methylthiotransferase RimO">
    <location>
        <begin position="1"/>
        <end position="445"/>
    </location>
</feature>
<feature type="domain" description="MTTase N-terminal" evidence="1">
    <location>
        <begin position="4"/>
        <end position="119"/>
    </location>
</feature>
<feature type="domain" description="Radical SAM core" evidence="2">
    <location>
        <begin position="143"/>
        <end position="373"/>
    </location>
</feature>
<feature type="domain" description="TRAM" evidence="1">
    <location>
        <begin position="376"/>
        <end position="441"/>
    </location>
</feature>
<feature type="binding site" evidence="1">
    <location>
        <position position="13"/>
    </location>
    <ligand>
        <name>[4Fe-4S] cluster</name>
        <dbReference type="ChEBI" id="CHEBI:49883"/>
        <label>1</label>
    </ligand>
</feature>
<feature type="binding site" evidence="1">
    <location>
        <position position="48"/>
    </location>
    <ligand>
        <name>[4Fe-4S] cluster</name>
        <dbReference type="ChEBI" id="CHEBI:49883"/>
        <label>1</label>
    </ligand>
</feature>
<feature type="binding site" evidence="1">
    <location>
        <position position="82"/>
    </location>
    <ligand>
        <name>[4Fe-4S] cluster</name>
        <dbReference type="ChEBI" id="CHEBI:49883"/>
        <label>1</label>
    </ligand>
</feature>
<feature type="binding site" evidence="1">
    <location>
        <position position="157"/>
    </location>
    <ligand>
        <name>[4Fe-4S] cluster</name>
        <dbReference type="ChEBI" id="CHEBI:49883"/>
        <label>2</label>
        <note>4Fe-4S-S-AdoMet</note>
    </ligand>
</feature>
<feature type="binding site" evidence="1">
    <location>
        <position position="161"/>
    </location>
    <ligand>
        <name>[4Fe-4S] cluster</name>
        <dbReference type="ChEBI" id="CHEBI:49883"/>
        <label>2</label>
        <note>4Fe-4S-S-AdoMet</note>
    </ligand>
</feature>
<feature type="binding site" evidence="1">
    <location>
        <position position="164"/>
    </location>
    <ligand>
        <name>[4Fe-4S] cluster</name>
        <dbReference type="ChEBI" id="CHEBI:49883"/>
        <label>2</label>
        <note>4Fe-4S-S-AdoMet</note>
    </ligand>
</feature>
<accession>Q0SSE5</accession>
<name>RIMO_CLOPS</name>
<protein>
    <recommendedName>
        <fullName evidence="1">Ribosomal protein uS12 methylthiotransferase RimO</fullName>
        <shortName evidence="1">uS12 MTTase</shortName>
        <shortName evidence="1">uS12 methylthiotransferase</shortName>
        <ecNumber evidence="1">2.8.4.4</ecNumber>
    </recommendedName>
    <alternativeName>
        <fullName evidence="1">Ribosomal protein uS12 (aspartate-C(3))-methylthiotransferase</fullName>
    </alternativeName>
    <alternativeName>
        <fullName evidence="1">Ribosome maturation factor RimO</fullName>
    </alternativeName>
</protein>
<proteinExistence type="inferred from homology"/>
<comment type="function">
    <text evidence="1">Catalyzes the methylthiolation of an aspartic acid residue of ribosomal protein uS12.</text>
</comment>
<comment type="catalytic activity">
    <reaction evidence="1">
        <text>L-aspartate(89)-[ribosomal protein uS12]-hydrogen + (sulfur carrier)-SH + AH2 + 2 S-adenosyl-L-methionine = 3-methylsulfanyl-L-aspartate(89)-[ribosomal protein uS12]-hydrogen + (sulfur carrier)-H + 5'-deoxyadenosine + L-methionine + A + S-adenosyl-L-homocysteine + 2 H(+)</text>
        <dbReference type="Rhea" id="RHEA:37087"/>
        <dbReference type="Rhea" id="RHEA-COMP:10460"/>
        <dbReference type="Rhea" id="RHEA-COMP:10461"/>
        <dbReference type="Rhea" id="RHEA-COMP:14737"/>
        <dbReference type="Rhea" id="RHEA-COMP:14739"/>
        <dbReference type="ChEBI" id="CHEBI:13193"/>
        <dbReference type="ChEBI" id="CHEBI:15378"/>
        <dbReference type="ChEBI" id="CHEBI:17319"/>
        <dbReference type="ChEBI" id="CHEBI:17499"/>
        <dbReference type="ChEBI" id="CHEBI:29917"/>
        <dbReference type="ChEBI" id="CHEBI:29961"/>
        <dbReference type="ChEBI" id="CHEBI:57844"/>
        <dbReference type="ChEBI" id="CHEBI:57856"/>
        <dbReference type="ChEBI" id="CHEBI:59789"/>
        <dbReference type="ChEBI" id="CHEBI:64428"/>
        <dbReference type="ChEBI" id="CHEBI:73599"/>
        <dbReference type="EC" id="2.8.4.4"/>
    </reaction>
</comment>
<comment type="cofactor">
    <cofactor evidence="1">
        <name>[4Fe-4S] cluster</name>
        <dbReference type="ChEBI" id="CHEBI:49883"/>
    </cofactor>
    <text evidence="1">Binds 2 [4Fe-4S] clusters. One cluster is coordinated with 3 cysteines and an exchangeable S-adenosyl-L-methionine.</text>
</comment>
<comment type="subcellular location">
    <subcellularLocation>
        <location evidence="1">Cytoplasm</location>
    </subcellularLocation>
</comment>
<comment type="similarity">
    <text evidence="1">Belongs to the methylthiotransferase family. RimO subfamily.</text>
</comment>
<evidence type="ECO:0000255" key="1">
    <source>
        <dbReference type="HAMAP-Rule" id="MF_01865"/>
    </source>
</evidence>
<evidence type="ECO:0000255" key="2">
    <source>
        <dbReference type="PROSITE-ProRule" id="PRU01266"/>
    </source>
</evidence>
<sequence>MAKYKVGMVSLGCDKNRVDSEIMLGMVQNEYELTNNPKEADIIIVNTCGFIEKAKQESINTILDMAKYKTSHNCKLLIATGCLTQRYGDELLELMPEIDIMLGVNDYAKINEAIMNFINGNNEKVKATNYSDVSINEGLRLITTDKATAYLRIAEGCDNFCTYCIIPKIRGKFRSRALESIVEEAKKLAENGVKELILIAQDTTNYGIDIYGEKKLHLVLRELAKIEGIEWIRVLYCYPEAIYDELIKEISVNDKVCNYLDLPIQHISNNVLKRMGRKTTKEEIIGKINDLRKNVPNIVLRTSLIVGFPGESCEDFNELKDFIKTIKLDKVGVFTYSREEGTPAAIMEDQIDEEVKKAREEEIMLLQKELSEEINKNKLGREYDVLIEKFNGEYYIGRSYEMAPDIDGCIYVKGNGAKKDQFCKVKIEKALEYDLVGVVCNESCK</sequence>